<name>TECRL_MOUSE</name>
<proteinExistence type="evidence at protein level"/>
<organism>
    <name type="scientific">Mus musculus</name>
    <name type="common">Mouse</name>
    <dbReference type="NCBI Taxonomy" id="10090"/>
    <lineage>
        <taxon>Eukaryota</taxon>
        <taxon>Metazoa</taxon>
        <taxon>Chordata</taxon>
        <taxon>Craniata</taxon>
        <taxon>Vertebrata</taxon>
        <taxon>Euteleostomi</taxon>
        <taxon>Mammalia</taxon>
        <taxon>Eutheria</taxon>
        <taxon>Euarchontoglires</taxon>
        <taxon>Glires</taxon>
        <taxon>Rodentia</taxon>
        <taxon>Myomorpha</taxon>
        <taxon>Muroidea</taxon>
        <taxon>Muridae</taxon>
        <taxon>Murinae</taxon>
        <taxon>Mus</taxon>
        <taxon>Mus</taxon>
    </lineage>
</organism>
<dbReference type="EC" id="1.3.1.-"/>
<dbReference type="EMBL" id="AF548365">
    <property type="protein sequence ID" value="AAN40798.1"/>
    <property type="molecule type" value="mRNA"/>
</dbReference>
<dbReference type="EMBL" id="AK052276">
    <property type="protein sequence ID" value="BAC34913.1"/>
    <property type="molecule type" value="mRNA"/>
</dbReference>
<dbReference type="EMBL" id="AK052284">
    <property type="protein sequence ID" value="BAC34916.1"/>
    <property type="molecule type" value="mRNA"/>
</dbReference>
<dbReference type="EMBL" id="BC107366">
    <property type="protein sequence ID" value="AAI07367.1"/>
    <property type="molecule type" value="mRNA"/>
</dbReference>
<dbReference type="EMBL" id="BC107367">
    <property type="protein sequence ID" value="AAI07368.1"/>
    <property type="molecule type" value="mRNA"/>
</dbReference>
<dbReference type="CCDS" id="CCDS19375.1"/>
<dbReference type="RefSeq" id="NP_722496.2">
    <property type="nucleotide sequence ID" value="NM_153801.3"/>
</dbReference>
<dbReference type="SMR" id="Q8BFZ1"/>
<dbReference type="FunCoup" id="Q8BFZ1">
    <property type="interactions" value="385"/>
</dbReference>
<dbReference type="STRING" id="10090.ENSMUSP00000062122"/>
<dbReference type="iPTMnet" id="Q8BFZ1"/>
<dbReference type="PhosphoSitePlus" id="Q8BFZ1"/>
<dbReference type="PaxDb" id="10090-ENSMUSP00000062122"/>
<dbReference type="ProteomicsDB" id="263099"/>
<dbReference type="Antibodypedia" id="68497">
    <property type="antibodies" value="77 antibodies from 11 providers"/>
</dbReference>
<dbReference type="DNASU" id="243078"/>
<dbReference type="Ensembl" id="ENSMUST00000053543.11">
    <property type="protein sequence ID" value="ENSMUSP00000062122.5"/>
    <property type="gene ID" value="ENSMUSG00000049537.11"/>
</dbReference>
<dbReference type="GeneID" id="243078"/>
<dbReference type="KEGG" id="mmu:243078"/>
<dbReference type="UCSC" id="uc008xwu.2">
    <property type="organism name" value="mouse"/>
</dbReference>
<dbReference type="AGR" id="MGI:2444966"/>
<dbReference type="CTD" id="253017"/>
<dbReference type="MGI" id="MGI:2444966">
    <property type="gene designation" value="Tecrl"/>
</dbReference>
<dbReference type="VEuPathDB" id="HostDB:ENSMUSG00000049537"/>
<dbReference type="eggNOG" id="KOG1639">
    <property type="taxonomic scope" value="Eukaryota"/>
</dbReference>
<dbReference type="GeneTree" id="ENSGT00950000182886"/>
<dbReference type="HOGENOM" id="CLU_059260_1_0_1"/>
<dbReference type="InParanoid" id="Q8BFZ1"/>
<dbReference type="OMA" id="RQVSWTT"/>
<dbReference type="OrthoDB" id="540503at2759"/>
<dbReference type="PhylomeDB" id="Q8BFZ1"/>
<dbReference type="TreeFam" id="TF300908"/>
<dbReference type="Reactome" id="R-MMU-75876">
    <property type="pathway name" value="Synthesis of very long-chain fatty acyl-CoAs"/>
</dbReference>
<dbReference type="BioGRID-ORCS" id="243078">
    <property type="hits" value="1 hit in 78 CRISPR screens"/>
</dbReference>
<dbReference type="PRO" id="PR:Q8BFZ1"/>
<dbReference type="Proteomes" id="UP000000589">
    <property type="component" value="Chromosome 5"/>
</dbReference>
<dbReference type="RNAct" id="Q8BFZ1">
    <property type="molecule type" value="protein"/>
</dbReference>
<dbReference type="Bgee" id="ENSMUSG00000049537">
    <property type="expression patterns" value="Expressed in myocardium of ventricle and 49 other cell types or tissues"/>
</dbReference>
<dbReference type="ExpressionAtlas" id="Q8BFZ1">
    <property type="expression patterns" value="baseline and differential"/>
</dbReference>
<dbReference type="GO" id="GO:0005783">
    <property type="term" value="C:endoplasmic reticulum"/>
    <property type="evidence" value="ECO:0007669"/>
    <property type="project" value="UniProtKB-SubCell"/>
</dbReference>
<dbReference type="GO" id="GO:0016020">
    <property type="term" value="C:membrane"/>
    <property type="evidence" value="ECO:0007669"/>
    <property type="project" value="UniProtKB-SubCell"/>
</dbReference>
<dbReference type="GO" id="GO:0016627">
    <property type="term" value="F:oxidoreductase activity, acting on the CH-CH group of donors"/>
    <property type="evidence" value="ECO:0007669"/>
    <property type="project" value="InterPro"/>
</dbReference>
<dbReference type="GO" id="GO:0006629">
    <property type="term" value="P:lipid metabolic process"/>
    <property type="evidence" value="ECO:0007669"/>
    <property type="project" value="InterPro"/>
</dbReference>
<dbReference type="FunFam" id="3.10.20.90:FF:000131">
    <property type="entry name" value="trans-2,3-enoyl-CoA reductase-like"/>
    <property type="match status" value="1"/>
</dbReference>
<dbReference type="Gene3D" id="3.10.20.90">
    <property type="entry name" value="Phosphatidylinositol 3-kinase Catalytic Subunit, Chain A, domain 1"/>
    <property type="match status" value="1"/>
</dbReference>
<dbReference type="InterPro" id="IPR001104">
    <property type="entry name" value="3-oxo-5_a-steroid_4-DH_C"/>
</dbReference>
<dbReference type="InterPro" id="IPR039357">
    <property type="entry name" value="SRD5A/TECR"/>
</dbReference>
<dbReference type="InterPro" id="IPR049127">
    <property type="entry name" value="TECR-like_N"/>
</dbReference>
<dbReference type="PANTHER" id="PTHR10556">
    <property type="entry name" value="3-OXO-5-ALPHA-STEROID 4-DEHYDROGENASE"/>
    <property type="match status" value="1"/>
</dbReference>
<dbReference type="PANTHER" id="PTHR10556:SF27">
    <property type="entry name" value="TRANS-2,3-ENOYL-COA REDUCTASE-LIKE"/>
    <property type="match status" value="1"/>
</dbReference>
<dbReference type="Pfam" id="PF02544">
    <property type="entry name" value="Steroid_dh"/>
    <property type="match status" value="1"/>
</dbReference>
<dbReference type="Pfam" id="PF21696">
    <property type="entry name" value="TECR_N"/>
    <property type="match status" value="1"/>
</dbReference>
<dbReference type="PROSITE" id="PS50244">
    <property type="entry name" value="S5A_REDUCTASE"/>
    <property type="match status" value="1"/>
</dbReference>
<accession>Q8BFZ1</accession>
<accession>Q8CIX3</accession>
<feature type="chain" id="PRO_0000317714" description="Trans-2,3-enoyl-CoA reductase-like">
    <location>
        <begin position="1"/>
        <end position="361"/>
    </location>
</feature>
<feature type="transmembrane region" description="Helical" evidence="2">
    <location>
        <begin position="139"/>
        <end position="159"/>
    </location>
</feature>
<feature type="transmembrane region" description="Helical" evidence="2">
    <location>
        <begin position="181"/>
        <end position="201"/>
    </location>
</feature>
<feature type="transmembrane region" description="Helical" evidence="2">
    <location>
        <begin position="215"/>
        <end position="235"/>
    </location>
</feature>
<feature type="transmembrane region" description="Helical" evidence="2">
    <location>
        <begin position="309"/>
        <end position="329"/>
    </location>
</feature>
<feature type="modified residue" description="Phosphoserine" evidence="5">
    <location>
        <position position="33"/>
    </location>
</feature>
<feature type="modified residue" description="Phosphoserine" evidence="5">
    <location>
        <position position="35"/>
    </location>
</feature>
<feature type="sequence conflict" description="In Ref. 1; AAN40798." evidence="4" ref="1">
    <original>Y</original>
    <variation>H</variation>
    <location>
        <position position="232"/>
    </location>
</feature>
<evidence type="ECO:0000250" key="1">
    <source>
        <dbReference type="UniProtKB" id="Q5HYJ1"/>
    </source>
</evidence>
<evidence type="ECO:0000255" key="2"/>
<evidence type="ECO:0000269" key="3">
    <source>
    </source>
</evidence>
<evidence type="ECO:0000305" key="4"/>
<evidence type="ECO:0007744" key="5">
    <source>
    </source>
</evidence>
<keyword id="KW-0256">Endoplasmic reticulum</keyword>
<keyword id="KW-0472">Membrane</keyword>
<keyword id="KW-0560">Oxidoreductase</keyword>
<keyword id="KW-0597">Phosphoprotein</keyword>
<keyword id="KW-1185">Reference proteome</keyword>
<keyword id="KW-0812">Transmembrane</keyword>
<keyword id="KW-1133">Transmembrane helix</keyword>
<gene>
    <name type="primary">Tecrl</name>
    <name type="synonym">Srd5a2l2</name>
</gene>
<protein>
    <recommendedName>
        <fullName>Trans-2,3-enoyl-CoA reductase-like</fullName>
        <ecNumber>1.3.1.-</ecNumber>
    </recommendedName>
    <alternativeName>
        <fullName>Steroid 5-alpha-reductase 2-like 2 protein</fullName>
    </alternativeName>
</protein>
<sequence length="361" mass="41893">MFKRHKSLERKRELLFQGLPQSTMKNNARNFHSLSQLVLSAGPLKTTTAVKHSKTTHFEIEILDAHTRKQICIVDKVTQTSTIHDVKQKFHKACPKWYPSRIGLQLEYGGPYLRDYITVQSVAASSIITLYFTDLGQQVGWTTVFLAEYSGPLLIYLLFYLRSSYIYDVKESTRWPRHPVVHLAFFCHCIHYIRLLLETLFVHKVSTGHSPMKNLIKGCAFYWGFTSWMAYYINHPRYTPPSFGNRQVIVSAINFLFCEAGNHFINTVLAHPNHTGSNACFPSPNYNPFTWLFFLVSCPNYTYEIGSWISFTVMTQTLPVGIFTILMTIQMSLWARKKHKIYRKKFNSYVHRKSAIIPLIL</sequence>
<reference key="1">
    <citation type="journal article" date="2003" name="Sheng Wu Hua Xue Yu Sheng Wu Wu Li Jin Zhan">
        <title>Molecular cloning and expression analysis of Srd5a2l2, a novel mouse member of steroid 5 alpha-reductase family.</title>
        <authorList>
            <person name="Chen X.-G."/>
            <person name="Yong L."/>
            <person name="Zhang D.-L."/>
            <person name="Cheng J."/>
            <person name="Zhu W.-L."/>
            <person name="Dao J.-J."/>
        </authorList>
    </citation>
    <scope>NUCLEOTIDE SEQUENCE [MRNA]</scope>
    <source>
        <strain>BALB/cJ</strain>
        <tissue>Heart</tissue>
    </source>
</reference>
<reference key="2">
    <citation type="journal article" date="2005" name="Science">
        <title>The transcriptional landscape of the mammalian genome.</title>
        <authorList>
            <person name="Carninci P."/>
            <person name="Kasukawa T."/>
            <person name="Katayama S."/>
            <person name="Gough J."/>
            <person name="Frith M.C."/>
            <person name="Maeda N."/>
            <person name="Oyama R."/>
            <person name="Ravasi T."/>
            <person name="Lenhard B."/>
            <person name="Wells C."/>
            <person name="Kodzius R."/>
            <person name="Shimokawa K."/>
            <person name="Bajic V.B."/>
            <person name="Brenner S.E."/>
            <person name="Batalov S."/>
            <person name="Forrest A.R."/>
            <person name="Zavolan M."/>
            <person name="Davis M.J."/>
            <person name="Wilming L.G."/>
            <person name="Aidinis V."/>
            <person name="Allen J.E."/>
            <person name="Ambesi-Impiombato A."/>
            <person name="Apweiler R."/>
            <person name="Aturaliya R.N."/>
            <person name="Bailey T.L."/>
            <person name="Bansal M."/>
            <person name="Baxter L."/>
            <person name="Beisel K.W."/>
            <person name="Bersano T."/>
            <person name="Bono H."/>
            <person name="Chalk A.M."/>
            <person name="Chiu K.P."/>
            <person name="Choudhary V."/>
            <person name="Christoffels A."/>
            <person name="Clutterbuck D.R."/>
            <person name="Crowe M.L."/>
            <person name="Dalla E."/>
            <person name="Dalrymple B.P."/>
            <person name="de Bono B."/>
            <person name="Della Gatta G."/>
            <person name="di Bernardo D."/>
            <person name="Down T."/>
            <person name="Engstrom P."/>
            <person name="Fagiolini M."/>
            <person name="Faulkner G."/>
            <person name="Fletcher C.F."/>
            <person name="Fukushima T."/>
            <person name="Furuno M."/>
            <person name="Futaki S."/>
            <person name="Gariboldi M."/>
            <person name="Georgii-Hemming P."/>
            <person name="Gingeras T.R."/>
            <person name="Gojobori T."/>
            <person name="Green R.E."/>
            <person name="Gustincich S."/>
            <person name="Harbers M."/>
            <person name="Hayashi Y."/>
            <person name="Hensch T.K."/>
            <person name="Hirokawa N."/>
            <person name="Hill D."/>
            <person name="Huminiecki L."/>
            <person name="Iacono M."/>
            <person name="Ikeo K."/>
            <person name="Iwama A."/>
            <person name="Ishikawa T."/>
            <person name="Jakt M."/>
            <person name="Kanapin A."/>
            <person name="Katoh M."/>
            <person name="Kawasawa Y."/>
            <person name="Kelso J."/>
            <person name="Kitamura H."/>
            <person name="Kitano H."/>
            <person name="Kollias G."/>
            <person name="Krishnan S.P."/>
            <person name="Kruger A."/>
            <person name="Kummerfeld S.K."/>
            <person name="Kurochkin I.V."/>
            <person name="Lareau L.F."/>
            <person name="Lazarevic D."/>
            <person name="Lipovich L."/>
            <person name="Liu J."/>
            <person name="Liuni S."/>
            <person name="McWilliam S."/>
            <person name="Madan Babu M."/>
            <person name="Madera M."/>
            <person name="Marchionni L."/>
            <person name="Matsuda H."/>
            <person name="Matsuzawa S."/>
            <person name="Miki H."/>
            <person name="Mignone F."/>
            <person name="Miyake S."/>
            <person name="Morris K."/>
            <person name="Mottagui-Tabar S."/>
            <person name="Mulder N."/>
            <person name="Nakano N."/>
            <person name="Nakauchi H."/>
            <person name="Ng P."/>
            <person name="Nilsson R."/>
            <person name="Nishiguchi S."/>
            <person name="Nishikawa S."/>
            <person name="Nori F."/>
            <person name="Ohara O."/>
            <person name="Okazaki Y."/>
            <person name="Orlando V."/>
            <person name="Pang K.C."/>
            <person name="Pavan W.J."/>
            <person name="Pavesi G."/>
            <person name="Pesole G."/>
            <person name="Petrovsky N."/>
            <person name="Piazza S."/>
            <person name="Reed J."/>
            <person name="Reid J.F."/>
            <person name="Ring B.Z."/>
            <person name="Ringwald M."/>
            <person name="Rost B."/>
            <person name="Ruan Y."/>
            <person name="Salzberg S.L."/>
            <person name="Sandelin A."/>
            <person name="Schneider C."/>
            <person name="Schoenbach C."/>
            <person name="Sekiguchi K."/>
            <person name="Semple C.A."/>
            <person name="Seno S."/>
            <person name="Sessa L."/>
            <person name="Sheng Y."/>
            <person name="Shibata Y."/>
            <person name="Shimada H."/>
            <person name="Shimada K."/>
            <person name="Silva D."/>
            <person name="Sinclair B."/>
            <person name="Sperling S."/>
            <person name="Stupka E."/>
            <person name="Sugiura K."/>
            <person name="Sultana R."/>
            <person name="Takenaka Y."/>
            <person name="Taki K."/>
            <person name="Tammoja K."/>
            <person name="Tan S.L."/>
            <person name="Tang S."/>
            <person name="Taylor M.S."/>
            <person name="Tegner J."/>
            <person name="Teichmann S.A."/>
            <person name="Ueda H.R."/>
            <person name="van Nimwegen E."/>
            <person name="Verardo R."/>
            <person name="Wei C.L."/>
            <person name="Yagi K."/>
            <person name="Yamanishi H."/>
            <person name="Zabarovsky E."/>
            <person name="Zhu S."/>
            <person name="Zimmer A."/>
            <person name="Hide W."/>
            <person name="Bult C."/>
            <person name="Grimmond S.M."/>
            <person name="Teasdale R.D."/>
            <person name="Liu E.T."/>
            <person name="Brusic V."/>
            <person name="Quackenbush J."/>
            <person name="Wahlestedt C."/>
            <person name="Mattick J.S."/>
            <person name="Hume D.A."/>
            <person name="Kai C."/>
            <person name="Sasaki D."/>
            <person name="Tomaru Y."/>
            <person name="Fukuda S."/>
            <person name="Kanamori-Katayama M."/>
            <person name="Suzuki M."/>
            <person name="Aoki J."/>
            <person name="Arakawa T."/>
            <person name="Iida J."/>
            <person name="Imamura K."/>
            <person name="Itoh M."/>
            <person name="Kato T."/>
            <person name="Kawaji H."/>
            <person name="Kawagashira N."/>
            <person name="Kawashima T."/>
            <person name="Kojima M."/>
            <person name="Kondo S."/>
            <person name="Konno H."/>
            <person name="Nakano K."/>
            <person name="Ninomiya N."/>
            <person name="Nishio T."/>
            <person name="Okada M."/>
            <person name="Plessy C."/>
            <person name="Shibata K."/>
            <person name="Shiraki T."/>
            <person name="Suzuki S."/>
            <person name="Tagami M."/>
            <person name="Waki K."/>
            <person name="Watahiki A."/>
            <person name="Okamura-Oho Y."/>
            <person name="Suzuki H."/>
            <person name="Kawai J."/>
            <person name="Hayashizaki Y."/>
        </authorList>
    </citation>
    <scope>NUCLEOTIDE SEQUENCE [LARGE SCALE MRNA]</scope>
    <source>
        <strain>C57BL/6J</strain>
        <tissue>Heart</tissue>
    </source>
</reference>
<reference key="3">
    <citation type="journal article" date="2004" name="Genome Res.">
        <title>The status, quality, and expansion of the NIH full-length cDNA project: the Mammalian Gene Collection (MGC).</title>
        <authorList>
            <consortium name="The MGC Project Team"/>
        </authorList>
    </citation>
    <scope>NUCLEOTIDE SEQUENCE [LARGE SCALE MRNA]</scope>
</reference>
<reference key="4">
    <citation type="journal article" date="2010" name="Cell">
        <title>A tissue-specific atlas of mouse protein phosphorylation and expression.</title>
        <authorList>
            <person name="Huttlin E.L."/>
            <person name="Jedrychowski M.P."/>
            <person name="Elias J.E."/>
            <person name="Goswami T."/>
            <person name="Rad R."/>
            <person name="Beausoleil S.A."/>
            <person name="Villen J."/>
            <person name="Haas W."/>
            <person name="Sowa M.E."/>
            <person name="Gygi S.P."/>
        </authorList>
    </citation>
    <scope>PHOSPHORYLATION [LARGE SCALE ANALYSIS] AT SER-33 AND SER-35</scope>
    <scope>IDENTIFICATION BY MASS SPECTROMETRY [LARGE SCALE ANALYSIS]</scope>
    <source>
        <tissue>Heart</tissue>
    </source>
</reference>
<reference key="5">
    <citation type="journal article" date="2016" name="EMBO Mol. Med.">
        <title>TECRL, a new life-threatening inherited arrhythmia gene associated with overlapping clinical features of both LQTS and CPVT.</title>
        <authorList>
            <person name="Devalla H.D."/>
            <person name="Gelinas R."/>
            <person name="Aburawi E.H."/>
            <person name="Beqqali A."/>
            <person name="Goyette P."/>
            <person name="Freund C."/>
            <person name="Chaix M.A."/>
            <person name="Tadros R."/>
            <person name="Jiang H."/>
            <person name="Le Bechec A."/>
            <person name="Monshouwer-Kloots J.J."/>
            <person name="Zwetsloot T."/>
            <person name="Kosmidis G."/>
            <person name="Latour F."/>
            <person name="Alikashani A."/>
            <person name="Hoekstra M."/>
            <person name="Schlaepfer J."/>
            <person name="Mummery C.L."/>
            <person name="Stevenson B."/>
            <person name="Kutalik Z."/>
            <person name="de Vries A.A."/>
            <person name="Rivard L."/>
            <person name="Wilde A.A."/>
            <person name="Talajic M."/>
            <person name="Verkerk A.O."/>
            <person name="Al-Gazali L."/>
            <person name="Rioux J.D."/>
            <person name="Bhuiyan Z.A."/>
            <person name="Passier R."/>
        </authorList>
    </citation>
    <scope>TISSUE SPECIFICITY</scope>
    <scope>DEVELOPMENTAL STAGE</scope>
</reference>
<comment type="subcellular location">
    <subcellularLocation>
        <location evidence="4">Membrane</location>
        <topology evidence="4">Multi-pass membrane protein</topology>
    </subcellularLocation>
    <subcellularLocation>
        <location evidence="1">Endoplasmic reticulum</location>
    </subcellularLocation>
</comment>
<comment type="tissue specificity">
    <text evidence="3">Expression is highest in the heart with very low to almost undetectable levels in brain, skeletal muscle, stomach, pancreas, liver, kidney, small intestine, and uterus.</text>
</comment>
<comment type="developmental stage">
    <text evidence="3">At embryonic day 8.5 dpc, expressed in the developing heart with the strongest expression occurring in the inflow tract, especially in the left horn. At 9.5 dpc, expression is still detectable in the atria and ventricles, albeit at lower levels whereas strong expression remains in the inflow tract. From 10 dpc onwards, it is also expressed at low levels in somites, particularly in the myotome region, that gives rise to skeletal muscle. At 10.5 dpc, cardiac expression is no longer restricted to the inflow tract. At 14.5 dpc, it is expressed in the entire myocardium.</text>
</comment>
<comment type="similarity">
    <text evidence="4">Belongs to the steroid 5-alpha reductase family.</text>
</comment>